<comment type="function">
    <text evidence="1">May mediate protein transfer from the SecYEG translocon to the periplasmic chaperone network via its periplasmic C-terminal region.</text>
</comment>
<comment type="subunit">
    <text evidence="1">Interacts with the SecYEG translocon (By similarity). Forms a complex with PpiD (By similarity).</text>
</comment>
<comment type="subcellular location">
    <subcellularLocation>
        <location evidence="1">Cell inner membrane</location>
        <topology evidence="1">Single-pass type II membrane protein</topology>
        <orientation evidence="1">Periplasmic side</orientation>
    </subcellularLocation>
</comment>
<comment type="similarity">
    <text evidence="3">Belongs to the YfgM family.</text>
</comment>
<sequence length="204" mass="23096">MAYTIEEEQELTAIKAWWNENYKFIIVCFVIAFGGVFGWNYWQSHQIQKMHKASAEYEQALFNYQKDPKAQAEQFNQFIKNNEKTSYAVLALLDKAKIAVENKDFPLAEDALKQAMAQSNDDILSSVSALRLASVQFQLGQLDPALESLKSVKEQAWNSAKNLLAGDIQLAKGDKETAKKSYQQAQENAGALEQQLIQVRLNNL</sequence>
<dbReference type="EMBL" id="AF045461">
    <property type="protein sequence ID" value="AAC04858.1"/>
    <property type="molecule type" value="Genomic_DNA"/>
</dbReference>
<dbReference type="RefSeq" id="WP_233141571.1">
    <property type="nucleotide sequence ID" value="NZ_JABJZG010000003.1"/>
</dbReference>
<dbReference type="SMR" id="O52728"/>
<dbReference type="STRING" id="714.ACT75_03435"/>
<dbReference type="eggNOG" id="COG2976">
    <property type="taxonomic scope" value="Bacteria"/>
</dbReference>
<dbReference type="GO" id="GO:0005886">
    <property type="term" value="C:plasma membrane"/>
    <property type="evidence" value="ECO:0007669"/>
    <property type="project" value="UniProtKB-SubCell"/>
</dbReference>
<dbReference type="GO" id="GO:0044877">
    <property type="term" value="F:protein-containing complex binding"/>
    <property type="evidence" value="ECO:0007669"/>
    <property type="project" value="InterPro"/>
</dbReference>
<dbReference type="Gene3D" id="1.25.40.10">
    <property type="entry name" value="Tetratricopeptide repeat domain"/>
    <property type="match status" value="1"/>
</dbReference>
<dbReference type="InterPro" id="IPR018704">
    <property type="entry name" value="SecYEG/CpoB_TPR"/>
</dbReference>
<dbReference type="InterPro" id="IPR011990">
    <property type="entry name" value="TPR-like_helical_dom_sf"/>
</dbReference>
<dbReference type="InterPro" id="IPR026039">
    <property type="entry name" value="YfgM"/>
</dbReference>
<dbReference type="PANTHER" id="PTHR38035:SF1">
    <property type="entry name" value="ANCILLARY SECYEG TRANSLOCON SUBUNIT"/>
    <property type="match status" value="1"/>
</dbReference>
<dbReference type="PANTHER" id="PTHR38035">
    <property type="entry name" value="UPF0070 PROTEIN YFGM"/>
    <property type="match status" value="1"/>
</dbReference>
<dbReference type="Pfam" id="PF09976">
    <property type="entry name" value="TPR_21"/>
    <property type="match status" value="1"/>
</dbReference>
<dbReference type="PIRSF" id="PIRSF006170">
    <property type="entry name" value="YfgM"/>
    <property type="match status" value="1"/>
</dbReference>
<dbReference type="SUPFAM" id="SSF48452">
    <property type="entry name" value="TPR-like"/>
    <property type="match status" value="1"/>
</dbReference>
<gene>
    <name type="primary">1057</name>
</gene>
<reference key="1">
    <citation type="submission" date="1998-01" db="EMBL/GenBank/DDBJ databases">
        <authorList>
            <person name="Mintz K.P."/>
        </authorList>
    </citation>
    <scope>NUCLEOTIDE SEQUENCE [GENOMIC DNA]</scope>
    <source>
        <strain>SUNY 465</strain>
    </source>
</reference>
<accession>O52728</accession>
<proteinExistence type="inferred from homology"/>
<organism>
    <name type="scientific">Aggregatibacter actinomycetemcomitans</name>
    <name type="common">Actinobacillus actinomycetemcomitans</name>
    <name type="synonym">Haemophilus actinomycetemcomitans</name>
    <dbReference type="NCBI Taxonomy" id="714"/>
    <lineage>
        <taxon>Bacteria</taxon>
        <taxon>Pseudomonadati</taxon>
        <taxon>Pseudomonadota</taxon>
        <taxon>Gammaproteobacteria</taxon>
        <taxon>Pasteurellales</taxon>
        <taxon>Pasteurellaceae</taxon>
        <taxon>Aggregatibacter</taxon>
    </lineage>
</organism>
<feature type="chain" id="PRO_0000214360" description="Ancillary SecYEG translocon subunit">
    <location>
        <begin position="1"/>
        <end position="204"/>
    </location>
</feature>
<feature type="topological domain" description="Cytoplasmic" evidence="1">
    <location>
        <begin position="1"/>
        <end position="23"/>
    </location>
</feature>
<feature type="transmembrane region" description="Helical" evidence="2">
    <location>
        <begin position="24"/>
        <end position="44"/>
    </location>
</feature>
<feature type="topological domain" description="Periplasmic" evidence="1">
    <location>
        <begin position="45"/>
        <end position="204"/>
    </location>
</feature>
<keyword id="KW-0997">Cell inner membrane</keyword>
<keyword id="KW-1003">Cell membrane</keyword>
<keyword id="KW-0143">Chaperone</keyword>
<keyword id="KW-0472">Membrane</keyword>
<keyword id="KW-0812">Transmembrane</keyword>
<keyword id="KW-1133">Transmembrane helix</keyword>
<name>YFGM_AGGAC</name>
<evidence type="ECO:0000250" key="1">
    <source>
        <dbReference type="UniProtKB" id="P76576"/>
    </source>
</evidence>
<evidence type="ECO:0000255" key="2"/>
<evidence type="ECO:0000305" key="3"/>
<protein>
    <recommendedName>
        <fullName evidence="1">Ancillary SecYEG translocon subunit</fullName>
    </recommendedName>
    <alternativeName>
        <fullName evidence="1">Periplasmic chaperone YfgM</fullName>
    </alternativeName>
</protein>